<reference key="1">
    <citation type="journal article" date="2003" name="Nat. Genet.">
        <title>Comparative analysis of the genome sequences of Bordetella pertussis, Bordetella parapertussis and Bordetella bronchiseptica.</title>
        <authorList>
            <person name="Parkhill J."/>
            <person name="Sebaihia M."/>
            <person name="Preston A."/>
            <person name="Murphy L.D."/>
            <person name="Thomson N.R."/>
            <person name="Harris D.E."/>
            <person name="Holden M.T.G."/>
            <person name="Churcher C.M."/>
            <person name="Bentley S.D."/>
            <person name="Mungall K.L."/>
            <person name="Cerdeno-Tarraga A.-M."/>
            <person name="Temple L."/>
            <person name="James K.D."/>
            <person name="Harris B."/>
            <person name="Quail M.A."/>
            <person name="Achtman M."/>
            <person name="Atkin R."/>
            <person name="Baker S."/>
            <person name="Basham D."/>
            <person name="Bason N."/>
            <person name="Cherevach I."/>
            <person name="Chillingworth T."/>
            <person name="Collins M."/>
            <person name="Cronin A."/>
            <person name="Davis P."/>
            <person name="Doggett J."/>
            <person name="Feltwell T."/>
            <person name="Goble A."/>
            <person name="Hamlin N."/>
            <person name="Hauser H."/>
            <person name="Holroyd S."/>
            <person name="Jagels K."/>
            <person name="Leather S."/>
            <person name="Moule S."/>
            <person name="Norberczak H."/>
            <person name="O'Neil S."/>
            <person name="Ormond D."/>
            <person name="Price C."/>
            <person name="Rabbinowitsch E."/>
            <person name="Rutter S."/>
            <person name="Sanders M."/>
            <person name="Saunders D."/>
            <person name="Seeger K."/>
            <person name="Sharp S."/>
            <person name="Simmonds M."/>
            <person name="Skelton J."/>
            <person name="Squares R."/>
            <person name="Squares S."/>
            <person name="Stevens K."/>
            <person name="Unwin L."/>
            <person name="Whitehead S."/>
            <person name="Barrell B.G."/>
            <person name="Maskell D.J."/>
        </authorList>
    </citation>
    <scope>NUCLEOTIDE SEQUENCE [LARGE SCALE GENOMIC DNA]</scope>
    <source>
        <strain>ATCC BAA-588 / NCTC 13252 / RB50</strain>
    </source>
</reference>
<comment type="function">
    <text evidence="1">Produces ATP from ADP in the presence of a proton gradient across the membrane. The catalytic sites are hosted primarily by the beta subunits.</text>
</comment>
<comment type="catalytic activity">
    <reaction evidence="1">
        <text>ATP + H2O + 4 H(+)(in) = ADP + phosphate + 5 H(+)(out)</text>
        <dbReference type="Rhea" id="RHEA:57720"/>
        <dbReference type="ChEBI" id="CHEBI:15377"/>
        <dbReference type="ChEBI" id="CHEBI:15378"/>
        <dbReference type="ChEBI" id="CHEBI:30616"/>
        <dbReference type="ChEBI" id="CHEBI:43474"/>
        <dbReference type="ChEBI" id="CHEBI:456216"/>
        <dbReference type="EC" id="7.1.2.2"/>
    </reaction>
</comment>
<comment type="subunit">
    <text evidence="1">F-type ATPases have 2 components, CF(1) - the catalytic core - and CF(0) - the membrane proton channel. CF(1) has five subunits: alpha(3), beta(3), gamma(1), delta(1), epsilon(1). CF(0) has three main subunits: a(1), b(2) and c(9-12). The alpha and beta chains form an alternating ring which encloses part of the gamma chain. CF(1) is attached to CF(0) by a central stalk formed by the gamma and epsilon chains, while a peripheral stalk is formed by the delta and b chains.</text>
</comment>
<comment type="subcellular location">
    <subcellularLocation>
        <location evidence="1">Cell inner membrane</location>
        <topology evidence="1">Peripheral membrane protein</topology>
    </subcellularLocation>
</comment>
<comment type="similarity">
    <text evidence="1">Belongs to the ATPase alpha/beta chains family.</text>
</comment>
<accession>Q7WEM9</accession>
<organism>
    <name type="scientific">Bordetella bronchiseptica (strain ATCC BAA-588 / NCTC 13252 / RB50)</name>
    <name type="common">Alcaligenes bronchisepticus</name>
    <dbReference type="NCBI Taxonomy" id="257310"/>
    <lineage>
        <taxon>Bacteria</taxon>
        <taxon>Pseudomonadati</taxon>
        <taxon>Pseudomonadota</taxon>
        <taxon>Betaproteobacteria</taxon>
        <taxon>Burkholderiales</taxon>
        <taxon>Alcaligenaceae</taxon>
        <taxon>Bordetella</taxon>
    </lineage>
</organism>
<sequence length="466" mass="50505">MSNGTIVQCIGAVVDIQFPRDNMPKIYEALTLVDEGSSFAEKGLTLEVQQQLGDGVVRTIALGSSDGLRRGMQVAGTGAPISVPVGHGTLGRIMDVLGRPIDEAGPIASDEKRAIHQPAPRFDELSPSVELLETGIKVIDLVCPFAKGGKVGLFGGAGVGKTVNMMELINNIAKQHSGLSVFAGVGERTREGNDFYHEMEESNVLDKVAMVFGQMNEPPGNRLRVALTGLTMAEKFRDEGRDILFFVDNIYRYTLAGTEVSALLGRMPSAVGYQPTLAEEMGVLQERITSTKTGSITSIQAVYVPADDLTDPSPATTFQHLDSTVVLSRDIAALGIYPAVDPLDSSSRQLDPQVVGEEHYQVARGVQQTLQRYKELRDIIAILGMDELSPEDKQAVARARKIQRFLSQPFHVAEVFTGSPGKYVSLAETIRGFKMIVDGECDALPEQAFYMVGTIDEAFEKAKKLQ</sequence>
<proteinExistence type="inferred from homology"/>
<gene>
    <name evidence="1" type="primary">atpD</name>
    <name type="ordered locus">BB4605</name>
</gene>
<dbReference type="EC" id="7.1.2.2" evidence="1"/>
<dbReference type="EMBL" id="BX640451">
    <property type="protein sequence ID" value="CAE34967.1"/>
    <property type="molecule type" value="Genomic_DNA"/>
</dbReference>
<dbReference type="RefSeq" id="WP_003815343.1">
    <property type="nucleotide sequence ID" value="NC_002927.3"/>
</dbReference>
<dbReference type="SMR" id="Q7WEM9"/>
<dbReference type="GeneID" id="93205931"/>
<dbReference type="KEGG" id="bbr:BB4605"/>
<dbReference type="eggNOG" id="COG0055">
    <property type="taxonomic scope" value="Bacteria"/>
</dbReference>
<dbReference type="HOGENOM" id="CLU_022398_0_2_4"/>
<dbReference type="Proteomes" id="UP000001027">
    <property type="component" value="Chromosome"/>
</dbReference>
<dbReference type="GO" id="GO:0005886">
    <property type="term" value="C:plasma membrane"/>
    <property type="evidence" value="ECO:0007669"/>
    <property type="project" value="UniProtKB-SubCell"/>
</dbReference>
<dbReference type="GO" id="GO:0045259">
    <property type="term" value="C:proton-transporting ATP synthase complex"/>
    <property type="evidence" value="ECO:0007669"/>
    <property type="project" value="UniProtKB-KW"/>
</dbReference>
<dbReference type="GO" id="GO:0005524">
    <property type="term" value="F:ATP binding"/>
    <property type="evidence" value="ECO:0007669"/>
    <property type="project" value="UniProtKB-UniRule"/>
</dbReference>
<dbReference type="GO" id="GO:0016887">
    <property type="term" value="F:ATP hydrolysis activity"/>
    <property type="evidence" value="ECO:0007669"/>
    <property type="project" value="InterPro"/>
</dbReference>
<dbReference type="GO" id="GO:0046933">
    <property type="term" value="F:proton-transporting ATP synthase activity, rotational mechanism"/>
    <property type="evidence" value="ECO:0007669"/>
    <property type="project" value="UniProtKB-UniRule"/>
</dbReference>
<dbReference type="CDD" id="cd18110">
    <property type="entry name" value="ATP-synt_F1_beta_C"/>
    <property type="match status" value="1"/>
</dbReference>
<dbReference type="CDD" id="cd18115">
    <property type="entry name" value="ATP-synt_F1_beta_N"/>
    <property type="match status" value="1"/>
</dbReference>
<dbReference type="CDD" id="cd01133">
    <property type="entry name" value="F1-ATPase_beta_CD"/>
    <property type="match status" value="1"/>
</dbReference>
<dbReference type="FunFam" id="1.10.1140.10:FF:000001">
    <property type="entry name" value="ATP synthase subunit beta"/>
    <property type="match status" value="1"/>
</dbReference>
<dbReference type="FunFam" id="3.40.50.300:FF:000004">
    <property type="entry name" value="ATP synthase subunit beta"/>
    <property type="match status" value="1"/>
</dbReference>
<dbReference type="Gene3D" id="2.40.10.170">
    <property type="match status" value="1"/>
</dbReference>
<dbReference type="Gene3D" id="1.10.1140.10">
    <property type="entry name" value="Bovine Mitochondrial F1-atpase, Atp Synthase Beta Chain, Chain D, domain 3"/>
    <property type="match status" value="1"/>
</dbReference>
<dbReference type="Gene3D" id="3.40.50.300">
    <property type="entry name" value="P-loop containing nucleotide triphosphate hydrolases"/>
    <property type="match status" value="1"/>
</dbReference>
<dbReference type="HAMAP" id="MF_01347">
    <property type="entry name" value="ATP_synth_beta_bact"/>
    <property type="match status" value="1"/>
</dbReference>
<dbReference type="InterPro" id="IPR003593">
    <property type="entry name" value="AAA+_ATPase"/>
</dbReference>
<dbReference type="InterPro" id="IPR055190">
    <property type="entry name" value="ATP-synt_VA_C"/>
</dbReference>
<dbReference type="InterPro" id="IPR005722">
    <property type="entry name" value="ATP_synth_F1_bsu"/>
</dbReference>
<dbReference type="InterPro" id="IPR020003">
    <property type="entry name" value="ATPase_a/bsu_AS"/>
</dbReference>
<dbReference type="InterPro" id="IPR050053">
    <property type="entry name" value="ATPase_alpha/beta_chains"/>
</dbReference>
<dbReference type="InterPro" id="IPR004100">
    <property type="entry name" value="ATPase_F1/V1/A1_a/bsu_N"/>
</dbReference>
<dbReference type="InterPro" id="IPR036121">
    <property type="entry name" value="ATPase_F1/V1/A1_a/bsu_N_sf"/>
</dbReference>
<dbReference type="InterPro" id="IPR000194">
    <property type="entry name" value="ATPase_F1/V1/A1_a/bsu_nucl-bd"/>
</dbReference>
<dbReference type="InterPro" id="IPR024034">
    <property type="entry name" value="ATPase_F1/V1_b/a_C"/>
</dbReference>
<dbReference type="InterPro" id="IPR027417">
    <property type="entry name" value="P-loop_NTPase"/>
</dbReference>
<dbReference type="NCBIfam" id="TIGR01039">
    <property type="entry name" value="atpD"/>
    <property type="match status" value="1"/>
</dbReference>
<dbReference type="PANTHER" id="PTHR15184">
    <property type="entry name" value="ATP SYNTHASE"/>
    <property type="match status" value="1"/>
</dbReference>
<dbReference type="PANTHER" id="PTHR15184:SF71">
    <property type="entry name" value="ATP SYNTHASE SUBUNIT BETA, MITOCHONDRIAL"/>
    <property type="match status" value="1"/>
</dbReference>
<dbReference type="Pfam" id="PF00006">
    <property type="entry name" value="ATP-synt_ab"/>
    <property type="match status" value="1"/>
</dbReference>
<dbReference type="Pfam" id="PF02874">
    <property type="entry name" value="ATP-synt_ab_N"/>
    <property type="match status" value="1"/>
</dbReference>
<dbReference type="Pfam" id="PF22919">
    <property type="entry name" value="ATP-synt_VA_C"/>
    <property type="match status" value="1"/>
</dbReference>
<dbReference type="SMART" id="SM00382">
    <property type="entry name" value="AAA"/>
    <property type="match status" value="1"/>
</dbReference>
<dbReference type="SUPFAM" id="SSF47917">
    <property type="entry name" value="C-terminal domain of alpha and beta subunits of F1 ATP synthase"/>
    <property type="match status" value="1"/>
</dbReference>
<dbReference type="SUPFAM" id="SSF50615">
    <property type="entry name" value="N-terminal domain of alpha and beta subunits of F1 ATP synthase"/>
    <property type="match status" value="1"/>
</dbReference>
<dbReference type="SUPFAM" id="SSF52540">
    <property type="entry name" value="P-loop containing nucleoside triphosphate hydrolases"/>
    <property type="match status" value="1"/>
</dbReference>
<dbReference type="PROSITE" id="PS00152">
    <property type="entry name" value="ATPASE_ALPHA_BETA"/>
    <property type="match status" value="1"/>
</dbReference>
<protein>
    <recommendedName>
        <fullName evidence="1">ATP synthase subunit beta</fullName>
        <ecNumber evidence="1">7.1.2.2</ecNumber>
    </recommendedName>
    <alternativeName>
        <fullName evidence="1">ATP synthase F1 sector subunit beta</fullName>
    </alternativeName>
    <alternativeName>
        <fullName evidence="1">F-ATPase subunit beta</fullName>
    </alternativeName>
</protein>
<feature type="chain" id="PRO_0000254222" description="ATP synthase subunit beta">
    <location>
        <begin position="1"/>
        <end position="466"/>
    </location>
</feature>
<feature type="binding site" evidence="1">
    <location>
        <begin position="155"/>
        <end position="162"/>
    </location>
    <ligand>
        <name>ATP</name>
        <dbReference type="ChEBI" id="CHEBI:30616"/>
    </ligand>
</feature>
<keyword id="KW-0066">ATP synthesis</keyword>
<keyword id="KW-0067">ATP-binding</keyword>
<keyword id="KW-0997">Cell inner membrane</keyword>
<keyword id="KW-1003">Cell membrane</keyword>
<keyword id="KW-0139">CF(1)</keyword>
<keyword id="KW-0375">Hydrogen ion transport</keyword>
<keyword id="KW-0406">Ion transport</keyword>
<keyword id="KW-0472">Membrane</keyword>
<keyword id="KW-0547">Nucleotide-binding</keyword>
<keyword id="KW-1278">Translocase</keyword>
<keyword id="KW-0813">Transport</keyword>
<name>ATPB_BORBR</name>
<evidence type="ECO:0000255" key="1">
    <source>
        <dbReference type="HAMAP-Rule" id="MF_01347"/>
    </source>
</evidence>